<protein>
    <recommendedName>
        <fullName evidence="1">Large ribosomal subunit protein bL31B</fullName>
    </recommendedName>
    <alternativeName>
        <fullName evidence="2">50S ribosomal protein L31 type B</fullName>
    </alternativeName>
</protein>
<feature type="chain" id="PRO_0000259115" description="Large ribosomal subunit protein bL31B">
    <location>
        <begin position="1"/>
        <end position="93"/>
    </location>
</feature>
<gene>
    <name evidence="1" type="primary">rpmE2</name>
    <name type="ordered locus">Pcryo_2207</name>
</gene>
<keyword id="KW-0687">Ribonucleoprotein</keyword>
<keyword id="KW-0689">Ribosomal protein</keyword>
<comment type="subunit">
    <text evidence="1">Part of the 50S ribosomal subunit.</text>
</comment>
<comment type="similarity">
    <text evidence="1">Belongs to the bacterial ribosomal protein bL31 family. Type B subfamily.</text>
</comment>
<dbReference type="EMBL" id="CP000323">
    <property type="protein sequence ID" value="ABE75984.1"/>
    <property type="molecule type" value="Genomic_DNA"/>
</dbReference>
<dbReference type="RefSeq" id="WP_011514517.1">
    <property type="nucleotide sequence ID" value="NC_007969.1"/>
</dbReference>
<dbReference type="SMR" id="Q1Q8L9"/>
<dbReference type="STRING" id="335284.Pcryo_2207"/>
<dbReference type="KEGG" id="pcr:Pcryo_2207"/>
<dbReference type="eggNOG" id="COG0254">
    <property type="taxonomic scope" value="Bacteria"/>
</dbReference>
<dbReference type="HOGENOM" id="CLU_114306_2_1_6"/>
<dbReference type="Proteomes" id="UP000002425">
    <property type="component" value="Chromosome"/>
</dbReference>
<dbReference type="GO" id="GO:1990904">
    <property type="term" value="C:ribonucleoprotein complex"/>
    <property type="evidence" value="ECO:0007669"/>
    <property type="project" value="UniProtKB-KW"/>
</dbReference>
<dbReference type="GO" id="GO:0005840">
    <property type="term" value="C:ribosome"/>
    <property type="evidence" value="ECO:0007669"/>
    <property type="project" value="UniProtKB-KW"/>
</dbReference>
<dbReference type="GO" id="GO:0003735">
    <property type="term" value="F:structural constituent of ribosome"/>
    <property type="evidence" value="ECO:0007669"/>
    <property type="project" value="InterPro"/>
</dbReference>
<dbReference type="GO" id="GO:0006412">
    <property type="term" value="P:translation"/>
    <property type="evidence" value="ECO:0007669"/>
    <property type="project" value="UniProtKB-UniRule"/>
</dbReference>
<dbReference type="Gene3D" id="4.10.830.30">
    <property type="entry name" value="Ribosomal protein L31"/>
    <property type="match status" value="1"/>
</dbReference>
<dbReference type="HAMAP" id="MF_00502">
    <property type="entry name" value="Ribosomal_bL31_2"/>
    <property type="match status" value="1"/>
</dbReference>
<dbReference type="InterPro" id="IPR034704">
    <property type="entry name" value="Ribosomal_bL28/bL31-like_sf"/>
</dbReference>
<dbReference type="InterPro" id="IPR002150">
    <property type="entry name" value="Ribosomal_bL31"/>
</dbReference>
<dbReference type="InterPro" id="IPR027493">
    <property type="entry name" value="Ribosomal_bL31_B"/>
</dbReference>
<dbReference type="InterPro" id="IPR042105">
    <property type="entry name" value="Ribosomal_bL31_sf"/>
</dbReference>
<dbReference type="NCBIfam" id="TIGR00105">
    <property type="entry name" value="L31"/>
    <property type="match status" value="1"/>
</dbReference>
<dbReference type="NCBIfam" id="NF002462">
    <property type="entry name" value="PRK01678.1"/>
    <property type="match status" value="1"/>
</dbReference>
<dbReference type="PANTHER" id="PTHR33280">
    <property type="entry name" value="50S RIBOSOMAL PROTEIN L31, CHLOROPLASTIC"/>
    <property type="match status" value="1"/>
</dbReference>
<dbReference type="PANTHER" id="PTHR33280:SF1">
    <property type="entry name" value="LARGE RIBOSOMAL SUBUNIT PROTEIN BL31C"/>
    <property type="match status" value="1"/>
</dbReference>
<dbReference type="Pfam" id="PF01197">
    <property type="entry name" value="Ribosomal_L31"/>
    <property type="match status" value="1"/>
</dbReference>
<dbReference type="PRINTS" id="PR01249">
    <property type="entry name" value="RIBOSOMALL31"/>
</dbReference>
<dbReference type="SUPFAM" id="SSF143800">
    <property type="entry name" value="L28p-like"/>
    <property type="match status" value="1"/>
</dbReference>
<dbReference type="PROSITE" id="PS01143">
    <property type="entry name" value="RIBOSOMAL_L31"/>
    <property type="match status" value="1"/>
</dbReference>
<proteinExistence type="inferred from homology"/>
<reference key="1">
    <citation type="submission" date="2006-03" db="EMBL/GenBank/DDBJ databases">
        <title>Complete sequence of chromosome of Psychrobacter cryohalolentis K5.</title>
        <authorList>
            <consortium name="US DOE Joint Genome Institute"/>
            <person name="Copeland A."/>
            <person name="Lucas S."/>
            <person name="Lapidus A."/>
            <person name="Barry K."/>
            <person name="Detter J.C."/>
            <person name="Glavina T."/>
            <person name="Hammon N."/>
            <person name="Israni S."/>
            <person name="Dalin E."/>
            <person name="Tice H."/>
            <person name="Pitluck S."/>
            <person name="Brettin T."/>
            <person name="Bruce D."/>
            <person name="Han C."/>
            <person name="Tapia R."/>
            <person name="Sims D.R."/>
            <person name="Gilna P."/>
            <person name="Schmutz J."/>
            <person name="Larimer F."/>
            <person name="Land M."/>
            <person name="Hauser L."/>
            <person name="Kyrpides N."/>
            <person name="Kim E."/>
            <person name="Richardson P."/>
        </authorList>
    </citation>
    <scope>NUCLEOTIDE SEQUENCE [LARGE SCALE GENOMIC DNA]</scope>
    <source>
        <strain>ATCC BAA-1226 / DSM 17306 / VKM B-2378 / K5</strain>
    </source>
</reference>
<name>RL31B_PSYCK</name>
<accession>Q1Q8L9</accession>
<sequence>MRKDIHPNYQEVLFHDTNADVFFLTRSTVKTKTTREYEGSEYPYYPLDISSASHPFYTGEQRKTSTEGRVASFNKRFGAFGGRKKAADADAAE</sequence>
<evidence type="ECO:0000255" key="1">
    <source>
        <dbReference type="HAMAP-Rule" id="MF_00502"/>
    </source>
</evidence>
<evidence type="ECO:0000305" key="2"/>
<organism>
    <name type="scientific">Psychrobacter cryohalolentis (strain ATCC BAA-1226 / DSM 17306 / VKM B-2378 / K5)</name>
    <dbReference type="NCBI Taxonomy" id="335284"/>
    <lineage>
        <taxon>Bacteria</taxon>
        <taxon>Pseudomonadati</taxon>
        <taxon>Pseudomonadota</taxon>
        <taxon>Gammaproteobacteria</taxon>
        <taxon>Moraxellales</taxon>
        <taxon>Moraxellaceae</taxon>
        <taxon>Psychrobacter</taxon>
    </lineage>
</organism>